<name>CAPP_SHIFL</name>
<keyword id="KW-0120">Carbon dioxide fixation</keyword>
<keyword id="KW-0456">Lyase</keyword>
<keyword id="KW-0460">Magnesium</keyword>
<keyword id="KW-1185">Reference proteome</keyword>
<organism>
    <name type="scientific">Shigella flexneri</name>
    <dbReference type="NCBI Taxonomy" id="623"/>
    <lineage>
        <taxon>Bacteria</taxon>
        <taxon>Pseudomonadati</taxon>
        <taxon>Pseudomonadota</taxon>
        <taxon>Gammaproteobacteria</taxon>
        <taxon>Enterobacterales</taxon>
        <taxon>Enterobacteriaceae</taxon>
        <taxon>Shigella</taxon>
    </lineage>
</organism>
<protein>
    <recommendedName>
        <fullName evidence="1">Phosphoenolpyruvate carboxylase</fullName>
        <shortName evidence="1">PEPC</shortName>
        <shortName evidence="1">PEPCase</shortName>
        <ecNumber evidence="1">4.1.1.31</ecNumber>
    </recommendedName>
</protein>
<feature type="chain" id="PRO_0000166624" description="Phosphoenolpyruvate carboxylase">
    <location>
        <begin position="1"/>
        <end position="883"/>
    </location>
</feature>
<feature type="active site" evidence="1">
    <location>
        <position position="138"/>
    </location>
</feature>
<feature type="active site" evidence="1">
    <location>
        <position position="546"/>
    </location>
</feature>
<reference key="1">
    <citation type="journal article" date="2002" name="Nucleic Acids Res.">
        <title>Genome sequence of Shigella flexneri 2a: insights into pathogenicity through comparison with genomes of Escherichia coli K12 and O157.</title>
        <authorList>
            <person name="Jin Q."/>
            <person name="Yuan Z."/>
            <person name="Xu J."/>
            <person name="Wang Y."/>
            <person name="Shen Y."/>
            <person name="Lu W."/>
            <person name="Wang J."/>
            <person name="Liu H."/>
            <person name="Yang J."/>
            <person name="Yang F."/>
            <person name="Zhang X."/>
            <person name="Zhang J."/>
            <person name="Yang G."/>
            <person name="Wu H."/>
            <person name="Qu D."/>
            <person name="Dong J."/>
            <person name="Sun L."/>
            <person name="Xue Y."/>
            <person name="Zhao A."/>
            <person name="Gao Y."/>
            <person name="Zhu J."/>
            <person name="Kan B."/>
            <person name="Ding K."/>
            <person name="Chen S."/>
            <person name="Cheng H."/>
            <person name="Yao Z."/>
            <person name="He B."/>
            <person name="Chen R."/>
            <person name="Ma D."/>
            <person name="Qiang B."/>
            <person name="Wen Y."/>
            <person name="Hou Y."/>
            <person name="Yu J."/>
        </authorList>
    </citation>
    <scope>NUCLEOTIDE SEQUENCE [LARGE SCALE GENOMIC DNA]</scope>
    <source>
        <strain>301 / Serotype 2a</strain>
    </source>
</reference>
<reference key="2">
    <citation type="journal article" date="2003" name="Infect. Immun.">
        <title>Complete genome sequence and comparative genomics of Shigella flexneri serotype 2a strain 2457T.</title>
        <authorList>
            <person name="Wei J."/>
            <person name="Goldberg M.B."/>
            <person name="Burland V."/>
            <person name="Venkatesan M.M."/>
            <person name="Deng W."/>
            <person name="Fournier G."/>
            <person name="Mayhew G.F."/>
            <person name="Plunkett G. III"/>
            <person name="Rose D.J."/>
            <person name="Darling A."/>
            <person name="Mau B."/>
            <person name="Perna N.T."/>
            <person name="Payne S.M."/>
            <person name="Runyen-Janecky L.J."/>
            <person name="Zhou S."/>
            <person name="Schwartz D.C."/>
            <person name="Blattner F.R."/>
        </authorList>
    </citation>
    <scope>NUCLEOTIDE SEQUENCE [LARGE SCALE GENOMIC DNA]</scope>
    <source>
        <strain>ATCC 700930 / 2457T / Serotype 2a</strain>
    </source>
</reference>
<comment type="function">
    <text evidence="1">Forms oxaloacetate, a four-carbon dicarboxylic acid source for the tricarboxylic acid cycle.</text>
</comment>
<comment type="catalytic activity">
    <reaction evidence="1">
        <text>oxaloacetate + phosphate = phosphoenolpyruvate + hydrogencarbonate</text>
        <dbReference type="Rhea" id="RHEA:28370"/>
        <dbReference type="ChEBI" id="CHEBI:16452"/>
        <dbReference type="ChEBI" id="CHEBI:17544"/>
        <dbReference type="ChEBI" id="CHEBI:43474"/>
        <dbReference type="ChEBI" id="CHEBI:58702"/>
        <dbReference type="EC" id="4.1.1.31"/>
    </reaction>
</comment>
<comment type="cofactor">
    <cofactor evidence="1">
        <name>Mg(2+)</name>
        <dbReference type="ChEBI" id="CHEBI:18420"/>
    </cofactor>
</comment>
<comment type="similarity">
    <text evidence="1">Belongs to the PEPCase type 1 family.</text>
</comment>
<evidence type="ECO:0000255" key="1">
    <source>
        <dbReference type="HAMAP-Rule" id="MF_00595"/>
    </source>
</evidence>
<gene>
    <name evidence="1" type="primary">ppc</name>
    <name type="ordered locus">SF4033</name>
    <name type="ordered locus">S3713</name>
</gene>
<proteinExistence type="inferred from homology"/>
<accession>Q83IS7</accession>
<sequence length="883" mass="99096">MNEQYSALRSNVSMLGKVLGETIKDALGEHILERVETIRKLSKSSRAGNDANRQELLTTLQNLSNDELLPVARAFSQFLNLANTAEQYHSISPKGEAASNPEVIARTLRKLKNQPELSEDTIKKAVESLSLELVLTAHPTEITRRTLIHKMVEVNACLKQLDNKDIADYERNQLMRRLRQLIAQSWHTDEIRKLRPSPVDEAKWGFAVVENSLWQGVPNYLRELNEQLEENLGYKLPVEFVPVRFTSWMGGDRDGNPNVTADITRHVLLLSRWKATDLFLKDIQVLVSELSMVEATPELLALVGEEGAAEPYRYLMKNLRSRLMATQAWLEARLKGEELPKPEGLLTQNEELWEPLYACYQSLQACGMGIIANGDLLDTLRRVKCFGVPLVRIDIRQESTRHTEALGELTRYLGIGDYESWSEADKQAFLIRELNSKRPLLPRNWQPSAETREVLDTCQVIAEAPQGSIAAYVISMAKTPSDVLAVHLLLKEAGIGFAMPVAPLFETLDDLNNANDVMTQLLNIDWYRGLIQGKQMVMIGYSDSAKDAGVMAASWAQYQAQDALIKTCEKAGIELTLFHGRGGSIGRGGAPAHAALLSQPPGSLKGGLRVTEQGEMIRFKYGLPEITVSSLSLYTGAILEANLLPPPEPKESWRRIMDELSVISCDLYRGYVRENKDFVPYFRSATPEQELGKLPLGSRPAKRRPTGGVESLRAIPWIFAWTQNRLMLPAWLGAGTALQKVVEDGKQSELEAMCRDWPFFSTRLGMLEMVFAKADLWLAEYYDQRLVDKALWPLGKELRNLQEEDIKVVLAIANDSHLMADLPWIAESIQLRNIYTDPLNVLQAELLHRSRQAEKEGQEPDPRVEQALMVTIAGIAAGMRNTG</sequence>
<dbReference type="EC" id="4.1.1.31" evidence="1"/>
<dbReference type="EMBL" id="AE005674">
    <property type="protein sequence ID" value="AAN45463.1"/>
    <property type="molecule type" value="Genomic_DNA"/>
</dbReference>
<dbReference type="EMBL" id="AE014073">
    <property type="protein sequence ID" value="AAP18739.1"/>
    <property type="molecule type" value="Genomic_DNA"/>
</dbReference>
<dbReference type="RefSeq" id="NP_709756.1">
    <property type="nucleotide sequence ID" value="NC_004337.2"/>
</dbReference>
<dbReference type="RefSeq" id="WP_001005601.1">
    <property type="nucleotide sequence ID" value="NZ_WPGW01000012.1"/>
</dbReference>
<dbReference type="SMR" id="Q83IS7"/>
<dbReference type="STRING" id="198214.SF4033"/>
<dbReference type="PaxDb" id="198214-SF4033"/>
<dbReference type="GeneID" id="1025402"/>
<dbReference type="KEGG" id="sfl:SF4033"/>
<dbReference type="KEGG" id="sfx:S3713"/>
<dbReference type="PATRIC" id="fig|198214.7.peg.4755"/>
<dbReference type="HOGENOM" id="CLU_006557_2_0_6"/>
<dbReference type="Proteomes" id="UP000001006">
    <property type="component" value="Chromosome"/>
</dbReference>
<dbReference type="Proteomes" id="UP000002673">
    <property type="component" value="Chromosome"/>
</dbReference>
<dbReference type="GO" id="GO:0005829">
    <property type="term" value="C:cytosol"/>
    <property type="evidence" value="ECO:0007669"/>
    <property type="project" value="TreeGrafter"/>
</dbReference>
<dbReference type="GO" id="GO:0000287">
    <property type="term" value="F:magnesium ion binding"/>
    <property type="evidence" value="ECO:0007669"/>
    <property type="project" value="UniProtKB-UniRule"/>
</dbReference>
<dbReference type="GO" id="GO:0008964">
    <property type="term" value="F:phosphoenolpyruvate carboxylase activity"/>
    <property type="evidence" value="ECO:0007669"/>
    <property type="project" value="UniProtKB-UniRule"/>
</dbReference>
<dbReference type="GO" id="GO:0015977">
    <property type="term" value="P:carbon fixation"/>
    <property type="evidence" value="ECO:0007669"/>
    <property type="project" value="UniProtKB-UniRule"/>
</dbReference>
<dbReference type="GO" id="GO:0006107">
    <property type="term" value="P:oxaloacetate metabolic process"/>
    <property type="evidence" value="ECO:0007669"/>
    <property type="project" value="UniProtKB-UniRule"/>
</dbReference>
<dbReference type="GO" id="GO:0006099">
    <property type="term" value="P:tricarboxylic acid cycle"/>
    <property type="evidence" value="ECO:0007669"/>
    <property type="project" value="InterPro"/>
</dbReference>
<dbReference type="FunFam" id="1.20.1440.90:FF:000002">
    <property type="entry name" value="Phosphoenolpyruvate carboxylase"/>
    <property type="match status" value="1"/>
</dbReference>
<dbReference type="Gene3D" id="1.20.1440.90">
    <property type="entry name" value="Phosphoenolpyruvate/pyruvate domain"/>
    <property type="match status" value="1"/>
</dbReference>
<dbReference type="HAMAP" id="MF_00595">
    <property type="entry name" value="PEPcase_type1"/>
    <property type="match status" value="1"/>
</dbReference>
<dbReference type="InterPro" id="IPR021135">
    <property type="entry name" value="PEP_COase"/>
</dbReference>
<dbReference type="InterPro" id="IPR022805">
    <property type="entry name" value="PEP_COase_bac/pln-type"/>
</dbReference>
<dbReference type="InterPro" id="IPR018129">
    <property type="entry name" value="PEP_COase_Lys_AS"/>
</dbReference>
<dbReference type="InterPro" id="IPR033129">
    <property type="entry name" value="PEPCASE_His_AS"/>
</dbReference>
<dbReference type="InterPro" id="IPR015813">
    <property type="entry name" value="Pyrv/PenolPyrv_kinase-like_dom"/>
</dbReference>
<dbReference type="NCBIfam" id="NF000584">
    <property type="entry name" value="PRK00009.1"/>
    <property type="match status" value="1"/>
</dbReference>
<dbReference type="PANTHER" id="PTHR30523">
    <property type="entry name" value="PHOSPHOENOLPYRUVATE CARBOXYLASE"/>
    <property type="match status" value="1"/>
</dbReference>
<dbReference type="PANTHER" id="PTHR30523:SF6">
    <property type="entry name" value="PHOSPHOENOLPYRUVATE CARBOXYLASE"/>
    <property type="match status" value="1"/>
</dbReference>
<dbReference type="Pfam" id="PF00311">
    <property type="entry name" value="PEPcase"/>
    <property type="match status" value="1"/>
</dbReference>
<dbReference type="PRINTS" id="PR00150">
    <property type="entry name" value="PEPCARBXLASE"/>
</dbReference>
<dbReference type="SUPFAM" id="SSF51621">
    <property type="entry name" value="Phosphoenolpyruvate/pyruvate domain"/>
    <property type="match status" value="1"/>
</dbReference>
<dbReference type="PROSITE" id="PS00781">
    <property type="entry name" value="PEPCASE_1"/>
    <property type="match status" value="1"/>
</dbReference>
<dbReference type="PROSITE" id="PS00393">
    <property type="entry name" value="PEPCASE_2"/>
    <property type="match status" value="1"/>
</dbReference>